<feature type="chain" id="PRO_0000059289" description="PHD finger protein 1">
    <location>
        <begin position="1"/>
        <end position="559"/>
    </location>
</feature>
<feature type="domain" description="Tudor">
    <location>
        <begin position="29"/>
        <end position="86"/>
    </location>
</feature>
<feature type="zinc finger region" description="PHD-type 1" evidence="2">
    <location>
        <begin position="87"/>
        <end position="142"/>
    </location>
</feature>
<feature type="zinc finger region" description="PHD-type 2" evidence="2">
    <location>
        <begin position="186"/>
        <end position="240"/>
    </location>
</feature>
<feature type="region of interest" description="Disordered" evidence="3">
    <location>
        <begin position="338"/>
        <end position="434"/>
    </location>
</feature>
<feature type="region of interest" description="Disordered" evidence="3">
    <location>
        <begin position="448"/>
        <end position="526"/>
    </location>
</feature>
<feature type="compositionally biased region" description="Basic and acidic residues" evidence="3">
    <location>
        <begin position="369"/>
        <end position="386"/>
    </location>
</feature>
<feature type="compositionally biased region" description="Polar residues" evidence="3">
    <location>
        <begin position="417"/>
        <end position="426"/>
    </location>
</feature>
<feature type="compositionally biased region" description="Polar residues" evidence="3">
    <location>
        <begin position="449"/>
        <end position="459"/>
    </location>
</feature>
<feature type="compositionally biased region" description="Low complexity" evidence="3">
    <location>
        <begin position="481"/>
        <end position="515"/>
    </location>
</feature>
<feature type="sequence conflict" description="In Ref. 2; AAD00518." evidence="7" ref="2">
    <original>L</original>
    <variation>F</variation>
    <location>
        <position position="249"/>
    </location>
</feature>
<feature type="sequence conflict" description="In Ref. 1; BAA25074." evidence="7" ref="1">
    <original>G</original>
    <variation>E</variation>
    <location>
        <position position="344"/>
    </location>
</feature>
<feature type="sequence conflict" description="In Ref. 1; BAA25074." evidence="7" ref="1">
    <original>R</original>
    <variation>S</variation>
    <location>
        <position position="377"/>
    </location>
</feature>
<feature type="sequence conflict" description="In Ref. 1; BAA25074." evidence="7" ref="1">
    <original>G</original>
    <variation>R</variation>
    <location>
        <position position="555"/>
    </location>
</feature>
<feature type="sequence conflict" description="In Ref. 1; BAA25074." evidence="7" ref="1">
    <original>IF</original>
    <variation>HLPDSLLLLPSPFTHWHFHALDL</variation>
    <location>
        <begin position="558"/>
        <end position="559"/>
    </location>
</feature>
<feature type="strand" evidence="8">
    <location>
        <begin position="36"/>
        <end position="40"/>
    </location>
</feature>
<feature type="strand" evidence="8">
    <location>
        <begin position="46"/>
        <end position="55"/>
    </location>
</feature>
<feature type="turn" evidence="8">
    <location>
        <begin position="56"/>
        <end position="59"/>
    </location>
</feature>
<feature type="strand" evidence="8">
    <location>
        <begin position="60"/>
        <end position="65"/>
    </location>
</feature>
<feature type="strand" evidence="8">
    <location>
        <begin position="70"/>
        <end position="74"/>
    </location>
</feature>
<feature type="helix" evidence="8">
    <location>
        <begin position="75"/>
        <end position="77"/>
    </location>
</feature>
<feature type="strand" evidence="8">
    <location>
        <begin position="78"/>
        <end position="80"/>
    </location>
</feature>
<feature type="turn" evidence="8">
    <location>
        <begin position="91"/>
        <end position="93"/>
    </location>
</feature>
<feature type="strand" evidence="8">
    <location>
        <begin position="104"/>
        <end position="106"/>
    </location>
</feature>
<feature type="turn" evidence="8">
    <location>
        <begin position="108"/>
        <end position="110"/>
    </location>
</feature>
<feature type="strand" evidence="8">
    <location>
        <begin position="113"/>
        <end position="115"/>
    </location>
</feature>
<feature type="helix" evidence="8">
    <location>
        <begin position="116"/>
        <end position="118"/>
    </location>
</feature>
<feature type="strand" evidence="8">
    <location>
        <begin position="119"/>
        <end position="121"/>
    </location>
</feature>
<feature type="strand" evidence="8">
    <location>
        <begin position="126"/>
        <end position="130"/>
    </location>
</feature>
<feature type="helix" evidence="8">
    <location>
        <begin position="137"/>
        <end position="144"/>
    </location>
</feature>
<feature type="helix" evidence="8">
    <location>
        <begin position="155"/>
        <end position="164"/>
    </location>
</feature>
<feature type="helix" evidence="8">
    <location>
        <begin position="171"/>
        <end position="173"/>
    </location>
</feature>
<feature type="turn" evidence="8">
    <location>
        <begin position="189"/>
        <end position="191"/>
    </location>
</feature>
<feature type="turn" evidence="8">
    <location>
        <begin position="197"/>
        <end position="200"/>
    </location>
</feature>
<feature type="strand" evidence="8">
    <location>
        <begin position="201"/>
        <end position="204"/>
    </location>
</feature>
<feature type="turn" evidence="8">
    <location>
        <begin position="205"/>
        <end position="207"/>
    </location>
</feature>
<feature type="strand" evidence="8">
    <location>
        <begin position="210"/>
        <end position="212"/>
    </location>
</feature>
<feature type="helix" evidence="8">
    <location>
        <begin position="213"/>
        <end position="215"/>
    </location>
</feature>
<feature type="strand" evidence="8">
    <location>
        <begin position="230"/>
        <end position="233"/>
    </location>
</feature>
<feature type="helix" evidence="8">
    <location>
        <begin position="235"/>
        <end position="238"/>
    </location>
</feature>
<feature type="strand" evidence="8">
    <location>
        <begin position="243"/>
        <end position="246"/>
    </location>
</feature>
<feature type="helix" evidence="8">
    <location>
        <begin position="251"/>
        <end position="265"/>
    </location>
</feature>
<feature type="turn" evidence="8">
    <location>
        <begin position="273"/>
        <end position="276"/>
    </location>
</feature>
<feature type="helix" evidence="8">
    <location>
        <begin position="277"/>
        <end position="283"/>
    </location>
</feature>
<feature type="turn" evidence="8">
    <location>
        <begin position="285"/>
        <end position="288"/>
    </location>
</feature>
<feature type="helix" evidence="8">
    <location>
        <begin position="291"/>
        <end position="293"/>
    </location>
</feature>
<feature type="helix" evidence="8">
    <location>
        <begin position="298"/>
        <end position="311"/>
    </location>
</feature>
<feature type="turn" evidence="8">
    <location>
        <begin position="313"/>
        <end position="315"/>
    </location>
</feature>
<feature type="strand" evidence="8">
    <location>
        <begin position="316"/>
        <end position="318"/>
    </location>
</feature>
<feature type="helix" evidence="8">
    <location>
        <begin position="319"/>
        <end position="322"/>
    </location>
</feature>
<feature type="strand" evidence="8">
    <location>
        <begin position="328"/>
        <end position="334"/>
    </location>
</feature>
<proteinExistence type="evidence at protein level"/>
<keyword id="KW-0002">3D-structure</keyword>
<keyword id="KW-0156">Chromatin regulator</keyword>
<keyword id="KW-0963">Cytoplasm</keyword>
<keyword id="KW-0206">Cytoskeleton</keyword>
<keyword id="KW-0227">DNA damage</keyword>
<keyword id="KW-0479">Metal-binding</keyword>
<keyword id="KW-0539">Nucleus</keyword>
<keyword id="KW-1185">Reference proteome</keyword>
<keyword id="KW-0677">Repeat</keyword>
<keyword id="KW-0678">Repressor</keyword>
<keyword id="KW-0804">Transcription</keyword>
<keyword id="KW-0805">Transcription regulation</keyword>
<keyword id="KW-0862">Zinc</keyword>
<keyword id="KW-0863">Zinc-finger</keyword>
<evidence type="ECO:0000250" key="1"/>
<evidence type="ECO:0000255" key="2">
    <source>
        <dbReference type="PROSITE-ProRule" id="PRU00146"/>
    </source>
</evidence>
<evidence type="ECO:0000256" key="3">
    <source>
        <dbReference type="SAM" id="MobiDB-lite"/>
    </source>
</evidence>
<evidence type="ECO:0000269" key="4">
    <source>
    </source>
</evidence>
<evidence type="ECO:0000269" key="5">
    <source>
    </source>
</evidence>
<evidence type="ECO:0000269" key="6">
    <source>
    </source>
</evidence>
<evidence type="ECO:0000305" key="7"/>
<evidence type="ECO:0007829" key="8">
    <source>
        <dbReference type="PDB" id="5XFQ"/>
    </source>
</evidence>
<accession>Q9Z1B8</accession>
<accession>O54808</accession>
<sequence>MAQLPRLSRLGAPSLWDPASPAPTSGPRPRLWEGQDVLARWTDGLLYLGTIKKVDSAREVCLVQFEDDSQFLVLWKDISPAALPGEELLCCVCRSETVVPGNRLVSCEKCRHAYHQDCHVPRAPAPGEGEGASWVCRQCVFAIATKRGGALKKGPYARAMLGMKLSLPYGLKGLDWDAGHLSNRQQSYCYCGGPGEWNLKMLQCRSCLQWFHEACTQCLSKPLLYGDRFYEFECCVCRGGPEKVRRLQLRWVDVAHLVLYHLSVCCKKKYFDFDREILPFTSENWDSLLLGELSDTPKGERSSQLLSALNSHKDRFISGREIKKRKCLFGLHARTPPPVELLTGDGAPTSFPSGQGPGGGVSRPLGKRWRSEPEPLRRRQKGKVEELGPPTAAHSRHGSREQRALQASVSPPPPSPNQSYEGSSGYNFRPTDARCLPSSPIRMFASFHPSASTAGTSGDSEPPDRSPLGLHIGFPTDTPKSSPHSVTASSSSVPALTPGFSRHSPPSPLCRSLSPGTGGGVRGGVSYLSRGDPVRVLARRVRPDGSVQYLVEWGGGGIF</sequence>
<protein>
    <recommendedName>
        <fullName>PHD finger protein 1</fullName>
        <shortName>Protein PHF1</shortName>
    </recommendedName>
    <alternativeName>
        <fullName>Polycomb-like protein 1</fullName>
        <shortName>mPCl1</shortName>
    </alternativeName>
    <alternativeName>
        <fullName>T-complex testis-expressed 3</fullName>
    </alternativeName>
</protein>
<organism>
    <name type="scientific">Mus musculus</name>
    <name type="common">Mouse</name>
    <dbReference type="NCBI Taxonomy" id="10090"/>
    <lineage>
        <taxon>Eukaryota</taxon>
        <taxon>Metazoa</taxon>
        <taxon>Chordata</taxon>
        <taxon>Craniata</taxon>
        <taxon>Vertebrata</taxon>
        <taxon>Euteleostomi</taxon>
        <taxon>Mammalia</taxon>
        <taxon>Eutheria</taxon>
        <taxon>Euarchontoglires</taxon>
        <taxon>Glires</taxon>
        <taxon>Rodentia</taxon>
        <taxon>Myomorpha</taxon>
        <taxon>Muroidea</taxon>
        <taxon>Muridae</taxon>
        <taxon>Murinae</taxon>
        <taxon>Mus</taxon>
        <taxon>Mus</taxon>
    </lineage>
</organism>
<reference key="1">
    <citation type="journal article" date="1998" name="Mamm. Genome">
        <title>Tctex3, related to Drosophila polycomblike, is expressed in male germ cells and mapped to the mouse T-complex.</title>
        <authorList>
            <person name="Kawakami S."/>
            <person name="Mitsunaga K."/>
            <person name="Kikuti Y.Y."/>
            <person name="Ando A."/>
            <person name="Inoko H."/>
            <person name="Yamamura K."/>
            <person name="Abe K."/>
        </authorList>
    </citation>
    <scope>NUCLEOTIDE SEQUENCE [MRNA]</scope>
    <source>
        <tissue>Testis</tissue>
    </source>
</reference>
<reference key="2">
    <citation type="journal article" date="1999" name="Dev. Biol.">
        <title>Misexpression of Polycomb-group proteins in Xenopus alters anterior neural development and represses neural target genes.</title>
        <authorList>
            <person name="Yoshitake Y."/>
            <person name="Howard T.L."/>
            <person name="Christian J.L."/>
            <person name="Hollenberg S.M."/>
        </authorList>
    </citation>
    <scope>NUCLEOTIDE SEQUENCE [MRNA]</scope>
    <source>
        <strain>NIH Swiss</strain>
    </source>
</reference>
<reference key="3">
    <citation type="journal article" date="2001" name="J. Cell Sci.">
        <title>CHMP1 is a novel nuclear matrix protein affecting chromatin structure and cell-cycle progression.</title>
        <authorList>
            <person name="Stauffer D.R."/>
            <person name="Howard T.L."/>
            <person name="Nyun T."/>
            <person name="Hollenberg S.M."/>
        </authorList>
    </citation>
    <scope>INTERACTION WITH CHMP1</scope>
</reference>
<reference key="4">
    <citation type="journal article" date="2008" name="Mol. Cell. Biol.">
        <title>Role of hPHF1 in H3K27 methylation and Hox gene silencing.</title>
        <authorList>
            <person name="Cao R."/>
            <person name="Wang H."/>
            <person name="He J."/>
            <person name="Erdjument-Bromage H."/>
            <person name="Tempst P."/>
            <person name="Zhang Y."/>
        </authorList>
    </citation>
    <scope>FUNCTION</scope>
    <scope>SUBCELLULAR LOCATION</scope>
</reference>
<reference key="5">
    <citation type="journal article" date="2010" name="Cell">
        <title>A tissue-specific atlas of mouse protein phosphorylation and expression.</title>
        <authorList>
            <person name="Huttlin E.L."/>
            <person name="Jedrychowski M.P."/>
            <person name="Elias J.E."/>
            <person name="Goswami T."/>
            <person name="Rad R."/>
            <person name="Beausoleil S.A."/>
            <person name="Villen J."/>
            <person name="Haas W."/>
            <person name="Sowa M.E."/>
            <person name="Gygi S.P."/>
        </authorList>
    </citation>
    <scope>IDENTIFICATION BY MASS SPECTROMETRY [LARGE SCALE ANALYSIS]</scope>
    <source>
        <tissue>Testis</tissue>
    </source>
</reference>
<reference key="6">
    <citation type="journal article" date="2012" name="Nat. Struct. Mol. Biol.">
        <title>Phf19 links methylated Lys36 of histone H3 to regulation of Polycomb activity.</title>
        <authorList>
            <person name="Ballare C."/>
            <person name="Lange M."/>
            <person name="Lapinaite A."/>
            <person name="Martin G.M."/>
            <person name="Morey L."/>
            <person name="Pascual G."/>
            <person name="Liefke R."/>
            <person name="Simon B."/>
            <person name="Shi Y."/>
            <person name="Gozani O."/>
            <person name="Carlomagno T."/>
            <person name="Benitah S.A."/>
            <person name="Di Croce L."/>
        </authorList>
    </citation>
    <scope>H3K36ME3-BINDING</scope>
</reference>
<dbReference type="EMBL" id="AB011550">
    <property type="protein sequence ID" value="BAA25074.1"/>
    <property type="molecule type" value="mRNA"/>
</dbReference>
<dbReference type="EMBL" id="U81490">
    <property type="protein sequence ID" value="AAD00518.1"/>
    <property type="molecule type" value="mRNA"/>
</dbReference>
<dbReference type="CCDS" id="CCDS37518.1"/>
<dbReference type="RefSeq" id="NP_033369.2">
    <property type="nucleotide sequence ID" value="NM_009343.3"/>
</dbReference>
<dbReference type="PDB" id="5XFQ">
    <property type="method" value="X-ray"/>
    <property type="resolution" value="2.40 A"/>
    <property type="chains" value="A/B=25-360"/>
</dbReference>
<dbReference type="PDBsum" id="5XFQ"/>
<dbReference type="BMRB" id="Q9Z1B8"/>
<dbReference type="SMR" id="Q9Z1B8"/>
<dbReference type="BioGRID" id="204083">
    <property type="interactions" value="3"/>
</dbReference>
<dbReference type="FunCoup" id="Q9Z1B8">
    <property type="interactions" value="3189"/>
</dbReference>
<dbReference type="IntAct" id="Q9Z1B8">
    <property type="interactions" value="2"/>
</dbReference>
<dbReference type="STRING" id="10090.ENSMUSP00000073402"/>
<dbReference type="GlyGen" id="Q9Z1B8">
    <property type="glycosylation" value="1 site"/>
</dbReference>
<dbReference type="iPTMnet" id="Q9Z1B8"/>
<dbReference type="PhosphoSitePlus" id="Q9Z1B8"/>
<dbReference type="PaxDb" id="10090-ENSMUSP00000073402"/>
<dbReference type="PeptideAtlas" id="Q9Z1B8"/>
<dbReference type="ProteomicsDB" id="288196"/>
<dbReference type="Pumba" id="Q9Z1B8"/>
<dbReference type="Antibodypedia" id="14271">
    <property type="antibodies" value="258 antibodies from 29 providers"/>
</dbReference>
<dbReference type="DNASU" id="21652"/>
<dbReference type="Ensembl" id="ENSMUST00000073724.7">
    <property type="protein sequence ID" value="ENSMUSP00000073402.6"/>
    <property type="gene ID" value="ENSMUSG00000024193.9"/>
</dbReference>
<dbReference type="GeneID" id="21652"/>
<dbReference type="KEGG" id="mmu:21652"/>
<dbReference type="UCSC" id="uc008bes.2">
    <property type="organism name" value="mouse"/>
</dbReference>
<dbReference type="AGR" id="MGI:98647"/>
<dbReference type="CTD" id="5252"/>
<dbReference type="MGI" id="MGI:98647">
    <property type="gene designation" value="Phf1"/>
</dbReference>
<dbReference type="VEuPathDB" id="HostDB:ENSMUSG00000024193"/>
<dbReference type="eggNOG" id="KOG4323">
    <property type="taxonomic scope" value="Eukaryota"/>
</dbReference>
<dbReference type="GeneTree" id="ENSGT00950000183180"/>
<dbReference type="HOGENOM" id="CLU_032773_2_0_1"/>
<dbReference type="InParanoid" id="Q9Z1B8"/>
<dbReference type="OMA" id="CAGPGWN"/>
<dbReference type="OrthoDB" id="43912at9989"/>
<dbReference type="PhylomeDB" id="Q9Z1B8"/>
<dbReference type="TreeFam" id="TF106420"/>
<dbReference type="Reactome" id="R-MMU-212300">
    <property type="pathway name" value="PRC2 methylates histones and DNA"/>
</dbReference>
<dbReference type="BioGRID-ORCS" id="21652">
    <property type="hits" value="5 hits in 80 CRISPR screens"/>
</dbReference>
<dbReference type="ChiTaRS" id="Phf1">
    <property type="organism name" value="mouse"/>
</dbReference>
<dbReference type="PRO" id="PR:Q9Z1B8"/>
<dbReference type="Proteomes" id="UP000000589">
    <property type="component" value="Chromosome 17"/>
</dbReference>
<dbReference type="RNAct" id="Q9Z1B8">
    <property type="molecule type" value="protein"/>
</dbReference>
<dbReference type="Bgee" id="ENSMUSG00000024193">
    <property type="expression patterns" value="Expressed in granulocyte and 209 other cell types or tissues"/>
</dbReference>
<dbReference type="ExpressionAtlas" id="Q9Z1B8">
    <property type="expression patterns" value="baseline and differential"/>
</dbReference>
<dbReference type="GO" id="GO:0005813">
    <property type="term" value="C:centrosome"/>
    <property type="evidence" value="ECO:0007669"/>
    <property type="project" value="UniProtKB-SubCell"/>
</dbReference>
<dbReference type="GO" id="GO:0005737">
    <property type="term" value="C:cytoplasm"/>
    <property type="evidence" value="ECO:0007669"/>
    <property type="project" value="UniProtKB-KW"/>
</dbReference>
<dbReference type="GO" id="GO:0035098">
    <property type="term" value="C:ESC/E(Z) complex"/>
    <property type="evidence" value="ECO:0000314"/>
    <property type="project" value="MGI"/>
</dbReference>
<dbReference type="GO" id="GO:0005634">
    <property type="term" value="C:nucleus"/>
    <property type="evidence" value="ECO:0000250"/>
    <property type="project" value="UniProtKB"/>
</dbReference>
<dbReference type="GO" id="GO:0035861">
    <property type="term" value="C:site of double-strand break"/>
    <property type="evidence" value="ECO:0000250"/>
    <property type="project" value="UniProtKB"/>
</dbReference>
<dbReference type="GO" id="GO:0140003">
    <property type="term" value="F:histone H3K36me3 reader activity"/>
    <property type="evidence" value="ECO:0000314"/>
    <property type="project" value="UniProtKB"/>
</dbReference>
<dbReference type="GO" id="GO:0035064">
    <property type="term" value="F:methylated histone binding"/>
    <property type="evidence" value="ECO:0007669"/>
    <property type="project" value="UniProtKB-ARBA"/>
</dbReference>
<dbReference type="GO" id="GO:0008270">
    <property type="term" value="F:zinc ion binding"/>
    <property type="evidence" value="ECO:0007669"/>
    <property type="project" value="UniProtKB-KW"/>
</dbReference>
<dbReference type="GO" id="GO:0140861">
    <property type="term" value="P:DNA repair-dependent chromatin remodeling"/>
    <property type="evidence" value="ECO:0000250"/>
    <property type="project" value="UniProtKB"/>
</dbReference>
<dbReference type="CDD" id="cd15500">
    <property type="entry name" value="PHD1_PHF1"/>
    <property type="match status" value="1"/>
</dbReference>
<dbReference type="CDD" id="cd15582">
    <property type="entry name" value="PHD2_PHF1"/>
    <property type="match status" value="1"/>
</dbReference>
<dbReference type="CDD" id="cd20449">
    <property type="entry name" value="Tudor_PHF1"/>
    <property type="match status" value="1"/>
</dbReference>
<dbReference type="FunFam" id="2.30.30.140:FF:000040">
    <property type="entry name" value="PHD finger protein 1 isoform X1"/>
    <property type="match status" value="1"/>
</dbReference>
<dbReference type="FunFam" id="3.30.40.10:FF:000125">
    <property type="entry name" value="Putative PHD finger protein 1"/>
    <property type="match status" value="1"/>
</dbReference>
<dbReference type="FunFam" id="3.90.980.20:FF:000003">
    <property type="entry name" value="Putative PHD finger protein 1"/>
    <property type="match status" value="1"/>
</dbReference>
<dbReference type="Gene3D" id="2.30.30.140">
    <property type="match status" value="1"/>
</dbReference>
<dbReference type="Gene3D" id="3.90.980.20">
    <property type="match status" value="1"/>
</dbReference>
<dbReference type="Gene3D" id="3.30.40.10">
    <property type="entry name" value="Zinc/RING finger domain, C3HC4 (zinc finger)"/>
    <property type="match status" value="1"/>
</dbReference>
<dbReference type="InterPro" id="IPR040477">
    <property type="entry name" value="KDM4-like_Tudor"/>
</dbReference>
<dbReference type="InterPro" id="IPR025894">
    <property type="entry name" value="Mtf2_C_dom"/>
</dbReference>
<dbReference type="InterPro" id="IPR031202">
    <property type="entry name" value="PHF1_PDH-finger1"/>
</dbReference>
<dbReference type="InterPro" id="IPR047010">
    <property type="entry name" value="PHF1_PHD-finger2"/>
</dbReference>
<dbReference type="InterPro" id="IPR002999">
    <property type="entry name" value="Tudor"/>
</dbReference>
<dbReference type="InterPro" id="IPR047399">
    <property type="entry name" value="Tudor_PHF1"/>
</dbReference>
<dbReference type="InterPro" id="IPR019786">
    <property type="entry name" value="Zinc_finger_PHD-type_CS"/>
</dbReference>
<dbReference type="InterPro" id="IPR011011">
    <property type="entry name" value="Znf_FYVE_PHD"/>
</dbReference>
<dbReference type="InterPro" id="IPR001965">
    <property type="entry name" value="Znf_PHD"/>
</dbReference>
<dbReference type="InterPro" id="IPR019787">
    <property type="entry name" value="Znf_PHD-finger"/>
</dbReference>
<dbReference type="InterPro" id="IPR013083">
    <property type="entry name" value="Znf_RING/FYVE/PHD"/>
</dbReference>
<dbReference type="PANTHER" id="PTHR12628:SF11">
    <property type="entry name" value="PHD FINGER PROTEIN 1"/>
    <property type="match status" value="1"/>
</dbReference>
<dbReference type="PANTHER" id="PTHR12628">
    <property type="entry name" value="POLYCOMB-LIKE TRANSCRIPTION FACTOR"/>
    <property type="match status" value="1"/>
</dbReference>
<dbReference type="Pfam" id="PF14061">
    <property type="entry name" value="Mtf2_C"/>
    <property type="match status" value="1"/>
</dbReference>
<dbReference type="Pfam" id="PF00628">
    <property type="entry name" value="PHD"/>
    <property type="match status" value="1"/>
</dbReference>
<dbReference type="Pfam" id="PF18104">
    <property type="entry name" value="Tudor_2"/>
    <property type="match status" value="1"/>
</dbReference>
<dbReference type="SMART" id="SM00249">
    <property type="entry name" value="PHD"/>
    <property type="match status" value="2"/>
</dbReference>
<dbReference type="SMART" id="SM00333">
    <property type="entry name" value="TUDOR"/>
    <property type="match status" value="1"/>
</dbReference>
<dbReference type="SUPFAM" id="SSF57903">
    <property type="entry name" value="FYVE/PHD zinc finger"/>
    <property type="match status" value="2"/>
</dbReference>
<dbReference type="SUPFAM" id="SSF63748">
    <property type="entry name" value="Tudor/PWWP/MBT"/>
    <property type="match status" value="1"/>
</dbReference>
<dbReference type="PROSITE" id="PS01359">
    <property type="entry name" value="ZF_PHD_1"/>
    <property type="match status" value="2"/>
</dbReference>
<dbReference type="PROSITE" id="PS50016">
    <property type="entry name" value="ZF_PHD_2"/>
    <property type="match status" value="1"/>
</dbReference>
<name>PHF1_MOUSE</name>
<comment type="function">
    <text evidence="5">Polycomb group (PcG) that specifically binds histone H3 trimethylated at 'Lys-36' (H3K36me3) and recruits the PRC2 complex. Involved in DNA damage response and is recruited at double-strand breaks (DSBs). Acts by binding to H3K36me3, a mark for transcriptional activation, and recruiting the PRC2 complex: it is however unclear whether recruitment of the PRC2 complex to H3K36me3 leads to enhance or inhibit H3K27me3 methylation mediated by the PRC2 complex. According to some reports, PRC2 recruitment by PHF1 promotes H3K27me3 and subsequent gene silencing by inducing spreading of PRC2 and H3K27me3 into H3K36me3 loci (PubMed:18086877). According to other reports, PHF1 recruits the PRC2 complex at double-strand breaks (DSBs) and inhibits the activity of PRC2. Regulates p53/TP53 stability and prolonges its turnover: may act by specifically binding to a methylated from of p53/TP53.</text>
</comment>
<comment type="subunit">
    <text evidence="1 4">Associated component of the PRC2 complex. Interacts with p53/TP53 (By similarity). Interacts with CHMP1.</text>
</comment>
<comment type="subcellular location">
    <subcellularLocation>
        <location evidence="5">Nucleus</location>
    </subcellularLocation>
    <subcellularLocation>
        <location evidence="1">Cytoplasm</location>
        <location evidence="1">Cytoskeleton</location>
        <location evidence="1">Microtubule organizing center</location>
        <location evidence="1">Centrosome</location>
    </subcellularLocation>
    <text evidence="1">Localizes specifically to the promoters of numerous target genes. Localizes to double-strand breaks (DSBs) sites following DNA damage. Colocalizes with NEK6 in the centrosome (By similarity).</text>
</comment>
<comment type="tissue specificity">
    <text>Testis-specific.</text>
</comment>
<comment type="domain">
    <text evidence="6">The Tudor domain recognizes and binds H3K36me3.</text>
</comment>
<comment type="similarity">
    <text evidence="7">Belongs to the Polycomblike family.</text>
</comment>
<gene>
    <name type="primary">Phf1</name>
    <name type="synonym">Plc1</name>
    <name type="synonym">Tctex-3</name>
    <name type="synonym">Tctex3</name>
</gene>